<gene>
    <name type="primary">nodC</name>
    <name type="ordered locus">blr2027</name>
</gene>
<dbReference type="EC" id="2.4.1.-"/>
<dbReference type="EMBL" id="AH010242">
    <property type="protein sequence ID" value="AAG60998.1"/>
    <property type="molecule type" value="Genomic_DNA"/>
</dbReference>
<dbReference type="EMBL" id="BA000040">
    <property type="protein sequence ID" value="BAC47292.1"/>
    <property type="molecule type" value="Genomic_DNA"/>
</dbReference>
<dbReference type="EMBL" id="D28958">
    <property type="protein sequence ID" value="BAA06084.1"/>
    <property type="molecule type" value="Genomic_DNA"/>
</dbReference>
<dbReference type="EMBL" id="D28956">
    <property type="protein sequence ID" value="BAA06082.1"/>
    <property type="molecule type" value="Genomic_DNA"/>
</dbReference>
<dbReference type="EMBL" id="D28957">
    <property type="protein sequence ID" value="BAA06083.1"/>
    <property type="molecule type" value="Genomic_DNA"/>
</dbReference>
<dbReference type="EMBL" id="D28962">
    <property type="protein sequence ID" value="BAA24092.1"/>
    <property type="molecule type" value="Genomic_DNA"/>
</dbReference>
<dbReference type="EMBL" id="J03685">
    <property type="protein sequence ID" value="AAA26226.1"/>
    <property type="molecule type" value="Genomic_DNA"/>
</dbReference>
<dbReference type="PIR" id="S27493">
    <property type="entry name" value="S27493"/>
</dbReference>
<dbReference type="RefSeq" id="NP_768667.1">
    <property type="nucleotide sequence ID" value="NC_004463.1"/>
</dbReference>
<dbReference type="RefSeq" id="WP_011084824.1">
    <property type="nucleotide sequence ID" value="NZ_CP011360.1"/>
</dbReference>
<dbReference type="SMR" id="P26024"/>
<dbReference type="STRING" id="224911.AAV28_06970"/>
<dbReference type="CAZy" id="GT2">
    <property type="family name" value="Glycosyltransferase Family 2"/>
</dbReference>
<dbReference type="EnsemblBacteria" id="BAC47292">
    <property type="protein sequence ID" value="BAC47292"/>
    <property type="gene ID" value="BAC47292"/>
</dbReference>
<dbReference type="GeneID" id="92969620"/>
<dbReference type="KEGG" id="bja:blr2027"/>
<dbReference type="PATRIC" id="fig|224911.44.peg.1529"/>
<dbReference type="eggNOG" id="COG1215">
    <property type="taxonomic scope" value="Bacteria"/>
</dbReference>
<dbReference type="HOGENOM" id="CLU_029695_4_2_5"/>
<dbReference type="InParanoid" id="P26024"/>
<dbReference type="OrthoDB" id="276604at2"/>
<dbReference type="Proteomes" id="UP000002526">
    <property type="component" value="Chromosome"/>
</dbReference>
<dbReference type="GO" id="GO:0005886">
    <property type="term" value="C:plasma membrane"/>
    <property type="evidence" value="ECO:0000318"/>
    <property type="project" value="GO_Central"/>
</dbReference>
<dbReference type="GO" id="GO:0050501">
    <property type="term" value="F:hyaluronan synthase activity"/>
    <property type="evidence" value="ECO:0000318"/>
    <property type="project" value="GO_Central"/>
</dbReference>
<dbReference type="GO" id="GO:0085029">
    <property type="term" value="P:extracellular matrix assembly"/>
    <property type="evidence" value="ECO:0000318"/>
    <property type="project" value="GO_Central"/>
</dbReference>
<dbReference type="GO" id="GO:0030213">
    <property type="term" value="P:hyaluronan biosynthetic process"/>
    <property type="evidence" value="ECO:0000318"/>
    <property type="project" value="GO_Central"/>
</dbReference>
<dbReference type="GO" id="GO:0000271">
    <property type="term" value="P:polysaccharide biosynthetic process"/>
    <property type="evidence" value="ECO:0000318"/>
    <property type="project" value="GO_Central"/>
</dbReference>
<dbReference type="CDD" id="cd06423">
    <property type="entry name" value="CESA_like"/>
    <property type="match status" value="1"/>
</dbReference>
<dbReference type="FunFam" id="3.90.550.10:FF:000246">
    <property type="entry name" value="Chitooligosaccharide synthase NodC"/>
    <property type="match status" value="1"/>
</dbReference>
<dbReference type="Gene3D" id="3.90.550.10">
    <property type="entry name" value="Spore Coat Polysaccharide Biosynthesis Protein SpsA, Chain A"/>
    <property type="match status" value="1"/>
</dbReference>
<dbReference type="InterPro" id="IPR026463">
    <property type="entry name" value="Chitooligosach_Synthase_NodC"/>
</dbReference>
<dbReference type="InterPro" id="IPR001173">
    <property type="entry name" value="Glyco_trans_2-like"/>
</dbReference>
<dbReference type="InterPro" id="IPR029044">
    <property type="entry name" value="Nucleotide-diphossugar_trans"/>
</dbReference>
<dbReference type="NCBIfam" id="TIGR04242">
    <property type="entry name" value="nodulat_NodC"/>
    <property type="match status" value="1"/>
</dbReference>
<dbReference type="PANTHER" id="PTHR22913">
    <property type="entry name" value="HYALURONAN SYNTHASE"/>
    <property type="match status" value="1"/>
</dbReference>
<dbReference type="PANTHER" id="PTHR22913:SF12">
    <property type="entry name" value="MANNURONAN SYNTHASE"/>
    <property type="match status" value="1"/>
</dbReference>
<dbReference type="Pfam" id="PF03142">
    <property type="entry name" value="Chitin_synth_2"/>
    <property type="match status" value="1"/>
</dbReference>
<dbReference type="Pfam" id="PF00535">
    <property type="entry name" value="Glycos_transf_2"/>
    <property type="match status" value="1"/>
</dbReference>
<dbReference type="SUPFAM" id="SSF53448">
    <property type="entry name" value="Nucleotide-diphospho-sugar transferases"/>
    <property type="match status" value="1"/>
</dbReference>
<keyword id="KW-1003">Cell membrane</keyword>
<keyword id="KW-0328">Glycosyltransferase</keyword>
<keyword id="KW-0472">Membrane</keyword>
<keyword id="KW-0536">Nodulation</keyword>
<keyword id="KW-1185">Reference proteome</keyword>
<keyword id="KW-0808">Transferase</keyword>
<accession>P26024</accession>
<accession>P53418</accession>
<accession>Q9AMY8</accession>
<evidence type="ECO:0000305" key="1"/>
<protein>
    <recommendedName>
        <fullName>N-acetylglucosaminyltransferase</fullName>
        <ecNumber>2.4.1.-</ecNumber>
    </recommendedName>
    <alternativeName>
        <fullName>Nodulation protein C</fullName>
    </alternativeName>
</protein>
<organism>
    <name type="scientific">Bradyrhizobium diazoefficiens (strain JCM 10833 / BCRC 13528 / IAM 13628 / NBRC 14792 / USDA 110)</name>
    <dbReference type="NCBI Taxonomy" id="224911"/>
    <lineage>
        <taxon>Bacteria</taxon>
        <taxon>Pseudomonadati</taxon>
        <taxon>Pseudomonadota</taxon>
        <taxon>Alphaproteobacteria</taxon>
        <taxon>Hyphomicrobiales</taxon>
        <taxon>Nitrobacteraceae</taxon>
        <taxon>Bradyrhizobium</taxon>
    </lineage>
</organism>
<comment type="function">
    <text>May be involved in the synthesis of NodRm-1, a sulfated N-acyl-beta-1,4-tetrasaccharide of N-acetylglucosamine which initiates a series of events in the host plant species leading eventually to nodulation.</text>
</comment>
<comment type="subcellular location">
    <subcellularLocation>
        <location evidence="1">Cell membrane</location>
        <topology evidence="1">Peripheral membrane protein</topology>
    </subcellularLocation>
</comment>
<comment type="similarity">
    <text evidence="1">Belongs to the NodC/HAS family.</text>
</comment>
<reference key="1">
    <citation type="journal article" date="2001" name="J. Bacteriol.">
        <title>Potential symbiosis-specific genes uncovered by sequencing a 410-kb DNA region of the Bradyrhizobium japonicum chromosome.</title>
        <authorList>
            <person name="Goettfert M."/>
            <person name="Roethlisberger S."/>
            <person name="Kuendig C."/>
            <person name="Beck C."/>
            <person name="Marty R."/>
            <person name="Hennecke H."/>
        </authorList>
    </citation>
    <scope>NUCLEOTIDE SEQUENCE [GENOMIC DNA]</scope>
    <source>
        <strain>USDA 110spc4</strain>
    </source>
</reference>
<reference key="2">
    <citation type="journal article" date="2002" name="DNA Res.">
        <title>Complete genomic sequence of nitrogen-fixing symbiotic bacterium Bradyrhizobium japonicum USDA110.</title>
        <authorList>
            <person name="Kaneko T."/>
            <person name="Nakamura Y."/>
            <person name="Sato S."/>
            <person name="Minamisawa K."/>
            <person name="Uchiumi T."/>
            <person name="Sasamoto S."/>
            <person name="Watanabe A."/>
            <person name="Idesawa K."/>
            <person name="Iriguchi M."/>
            <person name="Kawashima K."/>
            <person name="Kohara M."/>
            <person name="Matsumoto M."/>
            <person name="Shimpo S."/>
            <person name="Tsuruoka H."/>
            <person name="Wada T."/>
            <person name="Yamada M."/>
            <person name="Tabata S."/>
        </authorList>
    </citation>
    <scope>NUCLEOTIDE SEQUENCE [LARGE SCALE GENOMIC DNA]</scope>
    <source>
        <strain>JCM 10833 / BCRC 13528 / IAM 13628 / NBRC 14792 / USDA 110</strain>
    </source>
</reference>
<reference key="3">
    <citation type="journal article" date="1995" name="J. Bacteriol.">
        <title>Phylogeny of Sym plasmids of rhizobia by PCR-based sequencing of a nodC segment.</title>
        <authorList>
            <person name="Ueda T."/>
            <person name="Suga Y."/>
            <person name="Yahiro N."/>
            <person name="Matsuguchi T."/>
        </authorList>
    </citation>
    <scope>NUCLEOTIDE SEQUENCE [GENOMIC DNA] OF 91-181</scope>
    <source>
        <strain>USDA 122</strain>
        <strain>USDA 136</strain>
        <strain>USDA 142</strain>
        <strain>USDA 6</strain>
    </source>
</reference>
<reference key="4">
    <citation type="journal article" date="1990" name="Mol. Plant Microbe Interact.">
        <title>Identification of nodS and nodU, two inducible genes inserted between the Bradyrhizobium japonicum nodYABC and nodIJ genes.</title>
        <authorList>
            <person name="Goettfert M."/>
            <person name="Hitz S."/>
            <person name="Hennecke H."/>
        </authorList>
    </citation>
    <scope>NUCLEOTIDE SEQUENCE [GENOMIC DNA] OF 381-485</scope>
    <source>
        <strain>JCM 10833 / BCRC 13528 / IAM 13628 / NBRC 14792 / USDA 110</strain>
    </source>
</reference>
<proteinExistence type="inferred from homology"/>
<sequence>MDLLATTSAAAVSSYALLSTIYKSVQALYAQPAINSSLDNLGQAEVVVPAVDVIVPCFNENPNTLAECLESIASQDYAGKMQVYVVDDGSANRDVVAPVHRIYASDPRFSFILLANNVGKRKAQIAAIRSSSGDLVLNVDSDTILAADVVTKLVLKMHDPGIGAAMGQLIASNRNQTWLTRLIDMEYWLACNEERAAQARFGAVMCCCGPCAMYRRSALALLLDQYEAQFFRGKPSDFGEDRHLTILMLKAGFRTEYVPDAIAATVVPHSLRPYLRQQLRWARSTFRDTFLAWRLLPELDGYLTLDVIGQNLGPLLLAISSLAALAQLLIDGSIPWWTGLTIAAMTTVRCCVAALRARELRFIGFSLHTPINICLLLPLKAYALCTLSNSDWLSRKVTDMPTEEGKQPVILHPNAGRSPAGVGGRLLLFVRRRYRSLHRAWRRRRVFPVAIVRLSTNKWSADDSGRKPSVIRARVGCRRPVAPRH</sequence>
<name>NODC_BRADU</name>
<feature type="chain" id="PRO_0000197185" description="N-acetylglucosaminyltransferase">
    <location>
        <begin position="1"/>
        <end position="485"/>
    </location>
</feature>
<feature type="sequence variant" description="In strain: USDA 6.">
    <original>P</original>
    <variation>H</variation>
    <location>
        <position position="98"/>
    </location>
</feature>
<feature type="sequence variant" description="In strain: USDA 142, USDA 136 and USDA 122.">
    <original>P</original>
    <variation>L</variation>
    <location>
        <position position="98"/>
    </location>
</feature>